<comment type="function">
    <text evidence="4">Receptor for the endogenous fatty-acid ethanolamide oleoylethanolamide (OEA) and lysophosphatidylcholine (LPC). Functions as a glucose-dependent insulinotropic receptor. The activity of this receptor is mediated by G proteins which activate adenylate cyclase. Seems to act through a G(s) mediated pathway.</text>
</comment>
<comment type="subcellular location">
    <subcellularLocation>
        <location>Cell membrane</location>
        <topology>Multi-pass membrane protein</topology>
    </subcellularLocation>
</comment>
<comment type="tissue specificity">
    <text evidence="3 4">Expression restricted to the beta-cells of pancreatic islets.</text>
</comment>
<comment type="similarity">
    <text evidence="2">Belongs to the G-protein coupled receptor 1 family.</text>
</comment>
<evidence type="ECO:0000255" key="1"/>
<evidence type="ECO:0000255" key="2">
    <source>
        <dbReference type="PROSITE-ProRule" id="PRU00521"/>
    </source>
</evidence>
<evidence type="ECO:0000269" key="3">
    <source>
    </source>
</evidence>
<evidence type="ECO:0000269" key="4">
    <source>
    </source>
</evidence>
<reference key="1">
    <citation type="journal article" date="2003" name="FEBS Lett.">
        <title>Seven evolutionarily conserved human rhodopsin G protein-coupled receptors lacking close relatives.</title>
        <authorList>
            <person name="Fredriksson R."/>
            <person name="Hoeglund P.J."/>
            <person name="Gloriam D.E.I."/>
            <person name="Lagerstroem M.C."/>
            <person name="Schioeth H.B."/>
        </authorList>
    </citation>
    <scope>NUCLEOTIDE SEQUENCE [MRNA]</scope>
</reference>
<reference key="2">
    <citation type="journal article" date="2005" name="Biochem. Biophys. Res. Commun.">
        <title>Lysophosphatidylcholine enhances glucose-dependent insulin secretion via an orphan G-protein-coupled receptor.</title>
        <authorList>
            <person name="Soga T."/>
            <person name="Ohishi T."/>
            <person name="Matsui T."/>
            <person name="Saito T."/>
            <person name="Matsumoto M."/>
            <person name="Takasaki J."/>
            <person name="Matsumoto S."/>
            <person name="Kamohara M."/>
            <person name="Hiyama H."/>
            <person name="Yoshida S."/>
            <person name="Momose K."/>
            <person name="Ueda Y."/>
            <person name="Matsushime H."/>
            <person name="Kobori M."/>
            <person name="Furuichi K."/>
        </authorList>
    </citation>
    <scope>TISSUE SPECIFICITY</scope>
    <scope>CHARACTERIZATION</scope>
</reference>
<reference key="3">
    <citation type="journal article" date="2007" name="Endocrinology">
        <title>A role for beta-cell-expressed G protein-coupled receptor 119 in glycemic control by enhancing glucose-dependent insulin release.</title>
        <authorList>
            <person name="Chu Z.L."/>
            <person name="Jones R.M."/>
            <person name="He H."/>
            <person name="Carroll C."/>
            <person name="Gutierrez V."/>
            <person name="Lucman A."/>
            <person name="Moloney M."/>
            <person name="Gao H."/>
            <person name="Mondala H."/>
            <person name="Bagnol D."/>
            <person name="Unett D."/>
            <person name="Liang Y."/>
            <person name="Demarest K."/>
            <person name="Semple G."/>
            <person name="Behan D.P."/>
            <person name="Leonard J."/>
        </authorList>
    </citation>
    <scope>TISSUE SPECIFICITY</scope>
    <scope>FUNCTION</scope>
</reference>
<name>GP119_RAT</name>
<gene>
    <name type="primary">Gpr119</name>
</gene>
<proteinExistence type="evidence at protein level"/>
<keyword id="KW-1003">Cell membrane</keyword>
<keyword id="KW-0297">G-protein coupled receptor</keyword>
<keyword id="KW-0446">Lipid-binding</keyword>
<keyword id="KW-0472">Membrane</keyword>
<keyword id="KW-0675">Receptor</keyword>
<keyword id="KW-1185">Reference proteome</keyword>
<keyword id="KW-0807">Transducer</keyword>
<keyword id="KW-0812">Transmembrane</keyword>
<keyword id="KW-1133">Transmembrane helix</keyword>
<accession>Q7TQN8</accession>
<feature type="chain" id="PRO_0000069609" description="Glucose-dependent insulinotropic receptor">
    <location>
        <begin position="1"/>
        <end position="468"/>
    </location>
</feature>
<feature type="topological domain" description="Extracellular" evidence="1">
    <location>
        <begin position="1"/>
        <end position="6"/>
    </location>
</feature>
<feature type="transmembrane region" description="Helical; Name=1" evidence="1">
    <location>
        <begin position="7"/>
        <end position="27"/>
    </location>
</feature>
<feature type="topological domain" description="Cytoplasmic" evidence="1">
    <location>
        <begin position="28"/>
        <end position="37"/>
    </location>
</feature>
<feature type="transmembrane region" description="Helical; Name=2" evidence="1">
    <location>
        <begin position="38"/>
        <end position="58"/>
    </location>
</feature>
<feature type="topological domain" description="Extracellular" evidence="1">
    <location>
        <begin position="59"/>
        <end position="81"/>
    </location>
</feature>
<feature type="transmembrane region" description="Helical; Name=3" evidence="1">
    <location>
        <begin position="82"/>
        <end position="102"/>
    </location>
</feature>
<feature type="topological domain" description="Cytoplasmic" evidence="1">
    <location>
        <begin position="103"/>
        <end position="125"/>
    </location>
</feature>
<feature type="transmembrane region" description="Helical; Name=4" evidence="1">
    <location>
        <begin position="126"/>
        <end position="146"/>
    </location>
</feature>
<feature type="topological domain" description="Extracellular" evidence="1">
    <location>
        <begin position="147"/>
        <end position="164"/>
    </location>
</feature>
<feature type="transmembrane region" description="Helical; Name=5" evidence="1">
    <location>
        <begin position="165"/>
        <end position="185"/>
    </location>
</feature>
<feature type="topological domain" description="Cytoplasmic" evidence="1">
    <location>
        <begin position="186"/>
        <end position="226"/>
    </location>
</feature>
<feature type="transmembrane region" description="Helical; Name=6" evidence="1">
    <location>
        <begin position="227"/>
        <end position="247"/>
    </location>
</feature>
<feature type="topological domain" description="Extracellular" evidence="1">
    <location>
        <begin position="248"/>
        <end position="262"/>
    </location>
</feature>
<feature type="transmembrane region" description="Helical; Name=7" evidence="1">
    <location>
        <begin position="263"/>
        <end position="283"/>
    </location>
</feature>
<feature type="topological domain" description="Cytoplasmic" evidence="1">
    <location>
        <begin position="284"/>
        <end position="468"/>
    </location>
</feature>
<dbReference type="EMBL" id="AY288429">
    <property type="protein sequence ID" value="AAP72138.1"/>
    <property type="molecule type" value="mRNA"/>
</dbReference>
<dbReference type="RefSeq" id="NP_861435.1">
    <property type="nucleotide sequence ID" value="NM_181770.1"/>
</dbReference>
<dbReference type="SMR" id="Q7TQN8"/>
<dbReference type="FunCoup" id="Q7TQN8">
    <property type="interactions" value="47"/>
</dbReference>
<dbReference type="STRING" id="10116.ENSRNOP00000036164"/>
<dbReference type="BindingDB" id="Q7TQN8"/>
<dbReference type="ChEMBL" id="CHEMBL5262"/>
<dbReference type="GuidetoPHARMACOLOGY" id="126"/>
<dbReference type="PhosphoSitePlus" id="Q7TQN8"/>
<dbReference type="PaxDb" id="10116-ENSRNOP00000036164"/>
<dbReference type="Ensembl" id="ENSRNOT00000033619.4">
    <property type="protein sequence ID" value="ENSRNOP00000036164.3"/>
    <property type="gene ID" value="ENSRNOG00000024517.4"/>
</dbReference>
<dbReference type="GeneID" id="302813"/>
<dbReference type="KEGG" id="rno:302813"/>
<dbReference type="UCSC" id="RGD:727808">
    <property type="organism name" value="rat"/>
</dbReference>
<dbReference type="AGR" id="RGD:727808"/>
<dbReference type="CTD" id="139760"/>
<dbReference type="RGD" id="727808">
    <property type="gene designation" value="Gpr119"/>
</dbReference>
<dbReference type="eggNOG" id="KOG3656">
    <property type="taxonomic scope" value="Eukaryota"/>
</dbReference>
<dbReference type="GeneTree" id="ENSGT01120000271819"/>
<dbReference type="HOGENOM" id="CLU_583888_0_0_1"/>
<dbReference type="InParanoid" id="Q7TQN8"/>
<dbReference type="OMA" id="IFQQTTY"/>
<dbReference type="OrthoDB" id="55916at9989"/>
<dbReference type="PhylomeDB" id="Q7TQN8"/>
<dbReference type="TreeFam" id="TF325411"/>
<dbReference type="Reactome" id="R-RNO-381771">
    <property type="pathway name" value="Synthesis, secretion, and inactivation of Glucagon-like Peptide-1 (GLP-1)"/>
</dbReference>
<dbReference type="Reactome" id="R-RNO-400511">
    <property type="pathway name" value="Synthesis, secretion, and inactivation of Glucose-dependent Insulinotropic Polypeptide (GIP)"/>
</dbReference>
<dbReference type="PRO" id="PR:Q7TQN8"/>
<dbReference type="Proteomes" id="UP000002494">
    <property type="component" value="Chromosome X"/>
</dbReference>
<dbReference type="GO" id="GO:0005737">
    <property type="term" value="C:cytoplasm"/>
    <property type="evidence" value="ECO:0000318"/>
    <property type="project" value="GO_Central"/>
</dbReference>
<dbReference type="GO" id="GO:0005886">
    <property type="term" value="C:plasma membrane"/>
    <property type="evidence" value="ECO:0000318"/>
    <property type="project" value="GO_Central"/>
</dbReference>
<dbReference type="GO" id="GO:0043235">
    <property type="term" value="C:receptor complex"/>
    <property type="evidence" value="ECO:0000266"/>
    <property type="project" value="RGD"/>
</dbReference>
<dbReference type="GO" id="GO:0004930">
    <property type="term" value="F:G protein-coupled receptor activity"/>
    <property type="evidence" value="ECO:0000318"/>
    <property type="project" value="GO_Central"/>
</dbReference>
<dbReference type="GO" id="GO:0031210">
    <property type="term" value="F:phosphatidylcholine binding"/>
    <property type="evidence" value="ECO:0000266"/>
    <property type="project" value="RGD"/>
</dbReference>
<dbReference type="GO" id="GO:0007189">
    <property type="term" value="P:adenylate cyclase-activating G protein-coupled receptor signaling pathway"/>
    <property type="evidence" value="ECO:0000318"/>
    <property type="project" value="GO_Central"/>
</dbReference>
<dbReference type="GO" id="GO:0030073">
    <property type="term" value="P:insulin secretion"/>
    <property type="evidence" value="ECO:0000266"/>
    <property type="project" value="RGD"/>
</dbReference>
<dbReference type="GO" id="GO:0019222">
    <property type="term" value="P:regulation of metabolic process"/>
    <property type="evidence" value="ECO:0000318"/>
    <property type="project" value="GO_Central"/>
</dbReference>
<dbReference type="CDD" id="cd15104">
    <property type="entry name" value="7tmA_GPR119_R_insulinotropic_receptor"/>
    <property type="match status" value="1"/>
</dbReference>
<dbReference type="FunFam" id="1.20.1070.10:FF:000294">
    <property type="entry name" value="Glucose-dependent insulinotropic receptor"/>
    <property type="match status" value="1"/>
</dbReference>
<dbReference type="Gene3D" id="1.20.1070.10">
    <property type="entry name" value="Rhodopsin 7-helix transmembrane proteins"/>
    <property type="match status" value="1"/>
</dbReference>
<dbReference type="InterPro" id="IPR000276">
    <property type="entry name" value="GPCR_Rhodpsn"/>
</dbReference>
<dbReference type="InterPro" id="IPR017452">
    <property type="entry name" value="GPCR_Rhodpsn_7TM"/>
</dbReference>
<dbReference type="InterPro" id="IPR028336">
    <property type="entry name" value="GPR119"/>
</dbReference>
<dbReference type="PANTHER" id="PTHR22750">
    <property type="entry name" value="G-PROTEIN COUPLED RECEPTOR"/>
    <property type="match status" value="1"/>
</dbReference>
<dbReference type="Pfam" id="PF00001">
    <property type="entry name" value="7tm_1"/>
    <property type="match status" value="1"/>
</dbReference>
<dbReference type="PRINTS" id="PR00237">
    <property type="entry name" value="GPCRRHODOPSN"/>
</dbReference>
<dbReference type="SUPFAM" id="SSF81321">
    <property type="entry name" value="Family A G protein-coupled receptor-like"/>
    <property type="match status" value="1"/>
</dbReference>
<dbReference type="PROSITE" id="PS00237">
    <property type="entry name" value="G_PROTEIN_RECEP_F1_1"/>
    <property type="match status" value="1"/>
</dbReference>
<dbReference type="PROSITE" id="PS50262">
    <property type="entry name" value="G_PROTEIN_RECEP_F1_2"/>
    <property type="match status" value="1"/>
</dbReference>
<sequence>MESSFSFGVILAVLTILIIAVNALVVVAMLLSIYKNDGVGLCFTLNLAVADTLIGVAISGLVTDQLSSSAQHTQKTLCSLRMAFVTSSAAASVLTVMLIAFDRYLAIKQPLRYFQIMNGLVAGGCIAGLWLISYLIGFLPLGVSIFQQTTYHGPCTFFAVFHPRFVLTLSCAGFFPAVLLFVFFYCDMLKIASVHSQHIRKMEHAGAMVGACRPPRPVNDFKAVRTVSVLIGSFTLSWSPFLITSIVQVACHKCCLYQVLEKYLWLLGVGNSLLNPLIYAYWQREVRQQLCHMALGLLADGSTQPQIETLKGKEERKKVGRKTLYTCDAQTLYTCDAQTLYTCDAQTLYTCDACDTQTLYTCDAQTLYTCDAQTLYTCDAQTLYTCDAQTLYTCDAQTLYTCDTQTLYTCDAQTLYTCDAQTLYTCDAQTLYTCDAQTLYTSSLVTGQTEQTPLKRANMSDPLRTCRG</sequence>
<organism>
    <name type="scientific">Rattus norvegicus</name>
    <name type="common">Rat</name>
    <dbReference type="NCBI Taxonomy" id="10116"/>
    <lineage>
        <taxon>Eukaryota</taxon>
        <taxon>Metazoa</taxon>
        <taxon>Chordata</taxon>
        <taxon>Craniata</taxon>
        <taxon>Vertebrata</taxon>
        <taxon>Euteleostomi</taxon>
        <taxon>Mammalia</taxon>
        <taxon>Eutheria</taxon>
        <taxon>Euarchontoglires</taxon>
        <taxon>Glires</taxon>
        <taxon>Rodentia</taxon>
        <taxon>Myomorpha</taxon>
        <taxon>Muroidea</taxon>
        <taxon>Muridae</taxon>
        <taxon>Murinae</taxon>
        <taxon>Rattus</taxon>
    </lineage>
</organism>
<protein>
    <recommendedName>
        <fullName>Glucose-dependent insulinotropic receptor</fullName>
    </recommendedName>
    <alternativeName>
        <fullName>G-protein coupled receptor 119</fullName>
    </alternativeName>
</protein>